<gene>
    <name evidence="1" type="primary">hemC</name>
    <name type="ordered locus">ECA4188</name>
</gene>
<proteinExistence type="inferred from homology"/>
<protein>
    <recommendedName>
        <fullName evidence="1">Porphobilinogen deaminase</fullName>
        <shortName evidence="1">PBG</shortName>
        <ecNumber evidence="1">2.5.1.61</ecNumber>
    </recommendedName>
    <alternativeName>
        <fullName evidence="1">Hydroxymethylbilane synthase</fullName>
        <shortName evidence="1">HMBS</shortName>
    </alternativeName>
    <alternativeName>
        <fullName evidence="1">Pre-uroporphyrinogen synthase</fullName>
    </alternativeName>
</protein>
<reference key="1">
    <citation type="journal article" date="2004" name="Proc. Natl. Acad. Sci. U.S.A.">
        <title>Genome sequence of the enterobacterial phytopathogen Erwinia carotovora subsp. atroseptica and characterization of virulence factors.</title>
        <authorList>
            <person name="Bell K.S."/>
            <person name="Sebaihia M."/>
            <person name="Pritchard L."/>
            <person name="Holden M.T.G."/>
            <person name="Hyman L.J."/>
            <person name="Holeva M.C."/>
            <person name="Thomson N.R."/>
            <person name="Bentley S.D."/>
            <person name="Churcher L.J.C."/>
            <person name="Mungall K."/>
            <person name="Atkin R."/>
            <person name="Bason N."/>
            <person name="Brooks K."/>
            <person name="Chillingworth T."/>
            <person name="Clark K."/>
            <person name="Doggett J."/>
            <person name="Fraser A."/>
            <person name="Hance Z."/>
            <person name="Hauser H."/>
            <person name="Jagels K."/>
            <person name="Moule S."/>
            <person name="Norbertczak H."/>
            <person name="Ormond D."/>
            <person name="Price C."/>
            <person name="Quail M.A."/>
            <person name="Sanders M."/>
            <person name="Walker D."/>
            <person name="Whitehead S."/>
            <person name="Salmond G.P.C."/>
            <person name="Birch P.R.J."/>
            <person name="Parkhill J."/>
            <person name="Toth I.K."/>
        </authorList>
    </citation>
    <scope>NUCLEOTIDE SEQUENCE [LARGE SCALE GENOMIC DNA]</scope>
    <source>
        <strain>SCRI 1043 / ATCC BAA-672</strain>
    </source>
</reference>
<comment type="function">
    <text evidence="1">Tetrapolymerization of the monopyrrole PBG into the hydroxymethylbilane pre-uroporphyrinogen in several discrete steps.</text>
</comment>
<comment type="catalytic activity">
    <reaction evidence="1">
        <text>4 porphobilinogen + H2O = hydroxymethylbilane + 4 NH4(+)</text>
        <dbReference type="Rhea" id="RHEA:13185"/>
        <dbReference type="ChEBI" id="CHEBI:15377"/>
        <dbReference type="ChEBI" id="CHEBI:28938"/>
        <dbReference type="ChEBI" id="CHEBI:57845"/>
        <dbReference type="ChEBI" id="CHEBI:58126"/>
        <dbReference type="EC" id="2.5.1.61"/>
    </reaction>
</comment>
<comment type="cofactor">
    <cofactor evidence="1">
        <name>dipyrromethane</name>
        <dbReference type="ChEBI" id="CHEBI:60342"/>
    </cofactor>
    <text evidence="1">Binds 1 dipyrromethane group covalently.</text>
</comment>
<comment type="pathway">
    <text evidence="1">Porphyrin-containing compound metabolism; protoporphyrin-IX biosynthesis; coproporphyrinogen-III from 5-aminolevulinate: step 2/4.</text>
</comment>
<comment type="subunit">
    <text evidence="1">Monomer.</text>
</comment>
<comment type="miscellaneous">
    <text evidence="1">The porphobilinogen subunits are added to the dipyrromethane group.</text>
</comment>
<comment type="similarity">
    <text evidence="1">Belongs to the HMBS family.</text>
</comment>
<accession>Q6CZG3</accession>
<organism>
    <name type="scientific">Pectobacterium atrosepticum (strain SCRI 1043 / ATCC BAA-672)</name>
    <name type="common">Erwinia carotovora subsp. atroseptica</name>
    <dbReference type="NCBI Taxonomy" id="218491"/>
    <lineage>
        <taxon>Bacteria</taxon>
        <taxon>Pseudomonadati</taxon>
        <taxon>Pseudomonadota</taxon>
        <taxon>Gammaproteobacteria</taxon>
        <taxon>Enterobacterales</taxon>
        <taxon>Pectobacteriaceae</taxon>
        <taxon>Pectobacterium</taxon>
    </lineage>
</organism>
<evidence type="ECO:0000255" key="1">
    <source>
        <dbReference type="HAMAP-Rule" id="MF_00260"/>
    </source>
</evidence>
<keyword id="KW-0627">Porphyrin biosynthesis</keyword>
<keyword id="KW-1185">Reference proteome</keyword>
<keyword id="KW-0808">Transferase</keyword>
<name>HEM3_PECAS</name>
<sequence>MLANIIRIATRQSPLALWQARYVQQCLNHFYPDLHVELVPMVTRGDIILDTPLAKVGGKGLFVKELELALLEGRADIAVHSMKDVPVEFPDGLGLTTICERDDPRDAFVSNRYDSLEQLPEGSCVGTSSLRRQCQLRARRPDLVIRDLRGNVGTRLAKLDNGEYDAIILAVAGLKRLGLEERIRCALSPEESLPAVGQGAIGIECRLDDDRIRQLLAPLNHTDTAARVLAERAMNVRLEGGCQVPIGSYAELEGDTLWLRALVGAPDGSQMIVGERKGSVSDAEKIGVALAEELLAKGASAILQAVYQGQSSS</sequence>
<feature type="chain" id="PRO_0000142938" description="Porphobilinogen deaminase">
    <location>
        <begin position="1"/>
        <end position="313"/>
    </location>
</feature>
<feature type="modified residue" description="S-(dipyrrolylmethanemethyl)cysteine" evidence="1">
    <location>
        <position position="242"/>
    </location>
</feature>
<dbReference type="EC" id="2.5.1.61" evidence="1"/>
<dbReference type="EMBL" id="BX950851">
    <property type="protein sequence ID" value="CAG77085.1"/>
    <property type="molecule type" value="Genomic_DNA"/>
</dbReference>
<dbReference type="RefSeq" id="WP_011095659.1">
    <property type="nucleotide sequence ID" value="NC_004547.2"/>
</dbReference>
<dbReference type="SMR" id="Q6CZG3"/>
<dbReference type="STRING" id="218491.ECA4188"/>
<dbReference type="GeneID" id="57210850"/>
<dbReference type="KEGG" id="eca:ECA4188"/>
<dbReference type="PATRIC" id="fig|218491.5.peg.4263"/>
<dbReference type="eggNOG" id="COG0181">
    <property type="taxonomic scope" value="Bacteria"/>
</dbReference>
<dbReference type="HOGENOM" id="CLU_019704_0_2_6"/>
<dbReference type="OrthoDB" id="9810298at2"/>
<dbReference type="UniPathway" id="UPA00251">
    <property type="reaction ID" value="UER00319"/>
</dbReference>
<dbReference type="Proteomes" id="UP000007966">
    <property type="component" value="Chromosome"/>
</dbReference>
<dbReference type="GO" id="GO:0005737">
    <property type="term" value="C:cytoplasm"/>
    <property type="evidence" value="ECO:0007669"/>
    <property type="project" value="TreeGrafter"/>
</dbReference>
<dbReference type="GO" id="GO:0004418">
    <property type="term" value="F:hydroxymethylbilane synthase activity"/>
    <property type="evidence" value="ECO:0007669"/>
    <property type="project" value="UniProtKB-UniRule"/>
</dbReference>
<dbReference type="GO" id="GO:0006782">
    <property type="term" value="P:protoporphyrinogen IX biosynthetic process"/>
    <property type="evidence" value="ECO:0007669"/>
    <property type="project" value="UniProtKB-UniRule"/>
</dbReference>
<dbReference type="CDD" id="cd13646">
    <property type="entry name" value="PBP2_EcHMBS_like"/>
    <property type="match status" value="1"/>
</dbReference>
<dbReference type="FunFam" id="3.30.160.40:FF:000002">
    <property type="entry name" value="Porphobilinogen deaminase"/>
    <property type="match status" value="1"/>
</dbReference>
<dbReference type="FunFam" id="3.40.190.10:FF:000004">
    <property type="entry name" value="Porphobilinogen deaminase"/>
    <property type="match status" value="1"/>
</dbReference>
<dbReference type="FunFam" id="3.40.190.10:FF:000005">
    <property type="entry name" value="Porphobilinogen deaminase"/>
    <property type="match status" value="1"/>
</dbReference>
<dbReference type="Gene3D" id="3.40.190.10">
    <property type="entry name" value="Periplasmic binding protein-like II"/>
    <property type="match status" value="2"/>
</dbReference>
<dbReference type="Gene3D" id="3.30.160.40">
    <property type="entry name" value="Porphobilinogen deaminase, C-terminal domain"/>
    <property type="match status" value="1"/>
</dbReference>
<dbReference type="HAMAP" id="MF_00260">
    <property type="entry name" value="Porphobil_deam"/>
    <property type="match status" value="1"/>
</dbReference>
<dbReference type="InterPro" id="IPR000860">
    <property type="entry name" value="HemC"/>
</dbReference>
<dbReference type="InterPro" id="IPR022419">
    <property type="entry name" value="Porphobilin_deaminase_cofac_BS"/>
</dbReference>
<dbReference type="InterPro" id="IPR022417">
    <property type="entry name" value="Porphobilin_deaminase_N"/>
</dbReference>
<dbReference type="InterPro" id="IPR022418">
    <property type="entry name" value="Porphobilinogen_deaminase_C"/>
</dbReference>
<dbReference type="InterPro" id="IPR036803">
    <property type="entry name" value="Porphobilinogen_deaminase_C_sf"/>
</dbReference>
<dbReference type="NCBIfam" id="TIGR00212">
    <property type="entry name" value="hemC"/>
    <property type="match status" value="1"/>
</dbReference>
<dbReference type="PANTHER" id="PTHR11557">
    <property type="entry name" value="PORPHOBILINOGEN DEAMINASE"/>
    <property type="match status" value="1"/>
</dbReference>
<dbReference type="PANTHER" id="PTHR11557:SF0">
    <property type="entry name" value="PORPHOBILINOGEN DEAMINASE"/>
    <property type="match status" value="1"/>
</dbReference>
<dbReference type="Pfam" id="PF01379">
    <property type="entry name" value="Porphobil_deam"/>
    <property type="match status" value="1"/>
</dbReference>
<dbReference type="Pfam" id="PF03900">
    <property type="entry name" value="Porphobil_deamC"/>
    <property type="match status" value="1"/>
</dbReference>
<dbReference type="PIRSF" id="PIRSF001438">
    <property type="entry name" value="4pyrrol_synth_OHMeBilane_synth"/>
    <property type="match status" value="1"/>
</dbReference>
<dbReference type="PRINTS" id="PR00151">
    <property type="entry name" value="PORPHBDMNASE"/>
</dbReference>
<dbReference type="SUPFAM" id="SSF53850">
    <property type="entry name" value="Periplasmic binding protein-like II"/>
    <property type="match status" value="1"/>
</dbReference>
<dbReference type="SUPFAM" id="SSF54782">
    <property type="entry name" value="Porphobilinogen deaminase (hydroxymethylbilane synthase), C-terminal domain"/>
    <property type="match status" value="1"/>
</dbReference>
<dbReference type="PROSITE" id="PS00533">
    <property type="entry name" value="PORPHOBILINOGEN_DEAM"/>
    <property type="match status" value="1"/>
</dbReference>